<comment type="subcellular location">
    <subcellularLocation>
        <location evidence="2">Secreted</location>
    </subcellularLocation>
</comment>
<comment type="similarity">
    <text evidence="2">Belongs to the stereocilin family.</text>
</comment>
<comment type="caution">
    <text evidence="2">Could be the product of a pseudogene. According to PubMed:12825070, no evidence has been tendered concerning the existence of this protein.</text>
</comment>
<protein>
    <recommendedName>
        <fullName>Putative stereocilin-like protein</fullName>
    </recommendedName>
    <alternativeName>
        <fullName>Stereocilin pseudogene 1</fullName>
    </alternativeName>
</protein>
<feature type="signal peptide" evidence="1">
    <location>
        <begin position="1"/>
        <end position="25"/>
    </location>
</feature>
<feature type="chain" id="PRO_0000339348" description="Putative stereocilin-like protein">
    <location>
        <begin position="26"/>
        <end position="1772"/>
    </location>
</feature>
<feature type="glycosylation site" description="N-linked (GlcNAc...) asparagine" evidence="1">
    <location>
        <position position="65"/>
    </location>
</feature>
<feature type="glycosylation site" description="N-linked (GlcNAc...) asparagine" evidence="1">
    <location>
        <position position="427"/>
    </location>
</feature>
<feature type="glycosylation site" description="N-linked (GlcNAc...) asparagine" evidence="1">
    <location>
        <position position="476"/>
    </location>
</feature>
<feature type="glycosylation site" description="N-linked (GlcNAc...) asparagine" evidence="1">
    <location>
        <position position="565"/>
    </location>
</feature>
<dbReference type="EMBL" id="AC011330">
    <property type="status" value="NOT_ANNOTATED_CDS"/>
    <property type="molecule type" value="Genomic_DNA"/>
</dbReference>
<dbReference type="EMBL" id="AC018512">
    <property type="status" value="NOT_ANNOTATED_CDS"/>
    <property type="molecule type" value="Genomic_DNA"/>
</dbReference>
<dbReference type="FunCoup" id="A6NGW2">
    <property type="interactions" value="2"/>
</dbReference>
<dbReference type="GlyCosmos" id="A6NGW2">
    <property type="glycosylation" value="5 sites, 1 glycan"/>
</dbReference>
<dbReference type="GlyGen" id="A6NGW2">
    <property type="glycosylation" value="11 sites, 1 N-linked glycan (1 site)"/>
</dbReference>
<dbReference type="iPTMnet" id="A6NGW2"/>
<dbReference type="BioMuta" id="HGNC:33915"/>
<dbReference type="MassIVE" id="A6NGW2"/>
<dbReference type="AGR" id="HGNC:33915"/>
<dbReference type="GeneCards" id="STRCP1"/>
<dbReference type="HGNC" id="HGNC:33915">
    <property type="gene designation" value="STRCP1"/>
</dbReference>
<dbReference type="neXtProt" id="NX_A6NGW2"/>
<dbReference type="InParanoid" id="A6NGW2"/>
<dbReference type="PAN-GO" id="A6NGW2">
    <property type="GO annotations" value="4 GO annotations based on evolutionary models"/>
</dbReference>
<dbReference type="Pharos" id="A6NGW2">
    <property type="development level" value="Tdark"/>
</dbReference>
<dbReference type="Proteomes" id="UP000005640">
    <property type="component" value="Unplaced"/>
</dbReference>
<dbReference type="RNAct" id="A6NGW2">
    <property type="molecule type" value="protein"/>
</dbReference>
<dbReference type="GO" id="GO:0009986">
    <property type="term" value="C:cell surface"/>
    <property type="evidence" value="ECO:0000318"/>
    <property type="project" value="GO_Central"/>
</dbReference>
<dbReference type="GO" id="GO:0005576">
    <property type="term" value="C:extracellular region"/>
    <property type="evidence" value="ECO:0007669"/>
    <property type="project" value="UniProtKB-SubCell"/>
</dbReference>
<dbReference type="GO" id="GO:0060091">
    <property type="term" value="C:kinocilium"/>
    <property type="evidence" value="ECO:0000318"/>
    <property type="project" value="GO_Central"/>
</dbReference>
<dbReference type="GO" id="GO:0032426">
    <property type="term" value="C:stereocilium tip"/>
    <property type="evidence" value="ECO:0000318"/>
    <property type="project" value="GO_Central"/>
</dbReference>
<dbReference type="GO" id="GO:0007160">
    <property type="term" value="P:cell-matrix adhesion"/>
    <property type="evidence" value="ECO:0000318"/>
    <property type="project" value="GO_Central"/>
</dbReference>
<dbReference type="InterPro" id="IPR026664">
    <property type="entry name" value="Stereocilin-rel"/>
</dbReference>
<dbReference type="InterPro" id="IPR048992">
    <property type="entry name" value="Stereocilin_LRR"/>
</dbReference>
<dbReference type="PANTHER" id="PTHR23412">
    <property type="entry name" value="STEREOCILIN RELATED"/>
    <property type="match status" value="1"/>
</dbReference>
<dbReference type="PANTHER" id="PTHR23412:SF14">
    <property type="entry name" value="STEREOCILIN-RELATED"/>
    <property type="match status" value="1"/>
</dbReference>
<dbReference type="Pfam" id="PF21058">
    <property type="entry name" value="Stereocilin"/>
    <property type="match status" value="1"/>
</dbReference>
<keyword id="KW-0325">Glycoprotein</keyword>
<keyword id="KW-1185">Reference proteome</keyword>
<keyword id="KW-0964">Secreted</keyword>
<keyword id="KW-0732">Signal</keyword>
<proteinExistence type="uncertain"/>
<reference key="1">
    <citation type="journal article" date="2006" name="Nature">
        <title>Analysis of the DNA sequence and duplication history of human chromosome 15.</title>
        <authorList>
            <person name="Zody M.C."/>
            <person name="Garber M."/>
            <person name="Sharpe T."/>
            <person name="Young S.K."/>
            <person name="Rowen L."/>
            <person name="O'Neill K."/>
            <person name="Whittaker C.A."/>
            <person name="Kamal M."/>
            <person name="Chang J.L."/>
            <person name="Cuomo C.A."/>
            <person name="Dewar K."/>
            <person name="FitzGerald M.G."/>
            <person name="Kodira C.D."/>
            <person name="Madan A."/>
            <person name="Qin S."/>
            <person name="Yang X."/>
            <person name="Abbasi N."/>
            <person name="Abouelleil A."/>
            <person name="Arachchi H.M."/>
            <person name="Baradarani L."/>
            <person name="Birditt B."/>
            <person name="Bloom S."/>
            <person name="Bloom T."/>
            <person name="Borowsky M.L."/>
            <person name="Burke J."/>
            <person name="Butler J."/>
            <person name="Cook A."/>
            <person name="DeArellano K."/>
            <person name="DeCaprio D."/>
            <person name="Dorris L. III"/>
            <person name="Dors M."/>
            <person name="Eichler E.E."/>
            <person name="Engels R."/>
            <person name="Fahey J."/>
            <person name="Fleetwood P."/>
            <person name="Friedman C."/>
            <person name="Gearin G."/>
            <person name="Hall J.L."/>
            <person name="Hensley G."/>
            <person name="Johnson E."/>
            <person name="Jones C."/>
            <person name="Kamat A."/>
            <person name="Kaur A."/>
            <person name="Locke D.P."/>
            <person name="Madan A."/>
            <person name="Munson G."/>
            <person name="Jaffe D.B."/>
            <person name="Lui A."/>
            <person name="Macdonald P."/>
            <person name="Mauceli E."/>
            <person name="Naylor J.W."/>
            <person name="Nesbitt R."/>
            <person name="Nicol R."/>
            <person name="O'Leary S.B."/>
            <person name="Ratcliffe A."/>
            <person name="Rounsley S."/>
            <person name="She X."/>
            <person name="Sneddon K.M.B."/>
            <person name="Stewart S."/>
            <person name="Sougnez C."/>
            <person name="Stone S.M."/>
            <person name="Topham K."/>
            <person name="Vincent D."/>
            <person name="Wang S."/>
            <person name="Zimmer A.R."/>
            <person name="Birren B.W."/>
            <person name="Hood L."/>
            <person name="Lander E.S."/>
            <person name="Nusbaum C."/>
        </authorList>
    </citation>
    <scope>NUCLEOTIDE SEQUENCE [LARGE SCALE GENOMIC DNA]</scope>
</reference>
<reference key="2">
    <citation type="journal article" date="2003" name="Eur. J. Hum. Genet.">
        <title>CATSPER2, a human autosomal nonsyndromic male infertility gene.</title>
        <authorList>
            <person name="Avidan N."/>
            <person name="Tamary H."/>
            <person name="Dgany O."/>
            <person name="Cattan D."/>
            <person name="Pariente A."/>
            <person name="Thulliez M."/>
            <person name="Borot N."/>
            <person name="Moati L."/>
            <person name="Barthelme A."/>
            <person name="Shalmon L."/>
            <person name="Krasnov T."/>
            <person name="Ben-Asher E."/>
            <person name="Olender T."/>
            <person name="Khen M."/>
            <person name="Yaniv I."/>
            <person name="Zaizov R."/>
            <person name="Shalev H."/>
            <person name="Delaunay J."/>
            <person name="Fellous M."/>
            <person name="Lancet D."/>
            <person name="Beckmann J.S."/>
        </authorList>
    </citation>
    <scope>IDENTIFICATION</scope>
</reference>
<organism>
    <name type="scientific">Homo sapiens</name>
    <name type="common">Human</name>
    <dbReference type="NCBI Taxonomy" id="9606"/>
    <lineage>
        <taxon>Eukaryota</taxon>
        <taxon>Metazoa</taxon>
        <taxon>Chordata</taxon>
        <taxon>Craniata</taxon>
        <taxon>Vertebrata</taxon>
        <taxon>Euteleostomi</taxon>
        <taxon>Mammalia</taxon>
        <taxon>Eutheria</taxon>
        <taxon>Euarchontoglires</taxon>
        <taxon>Primates</taxon>
        <taxon>Haplorrhini</taxon>
        <taxon>Catarrhini</taxon>
        <taxon>Hominidae</taxon>
        <taxon>Homo</taxon>
    </lineage>
</organism>
<gene>
    <name type="primary">STRCP1</name>
    <name type="synonym">STRCP</name>
</gene>
<accession>A6NGW2</accession>
<evidence type="ECO:0000255" key="1"/>
<evidence type="ECO:0000305" key="2"/>
<sequence>MALSLWPLLLLLLLLLLLSFAVTLAPTGPHSLDPGLSFLKSLLSTLDQAPQGSLSRSRFFTFLANISSSFEPGRMGEGPVGEPPPLQPPALRLHDFLVTLRGSPDWEPMLGLLGDMLALLGQEQTPRDFLVHQAGVLGGLVEVLLGALVPGGPPTPTQPPCTRDGPSDCVLAADWLPSLLLLLEGTRWQALVQVQPSVDPTNATGLDGREAAPHFLQGLLGLLTPTGELGSKEALWGGLLRTVGAPLYAAFQEGLLRVTHSLQDEVFSILGQPEPDTNGQCQGGNLQQLLLWGVRHNLSWDVQALGFLSGSPPPPPALLHCLSTGVPLPRASQPSAHISPRQRRAITVEALCENHLGPAPPYSISNFSIHLLCQHTKPATPQPHPSTTAICQTAVWYAVSWAPGAQGWLQACHDQFPDEFLDAICSNLSFSALSGSNRRLVKRLCAGLLPPPTSCPEGLPPVPLTPDIFWGCFLENETLWAERLCGEASLQAVPPSNQAWVQHVCQGPTPDVTASPPCHIGPCGERCPDGGSFLVMVCANDTMYEVLVPFWPWLAGQCRISRGGNDTCFLEGLLGPLLPSLPPLGPSPLCLTPGPFLLGMLSQLPRCQSSVPALAHPTRLHYLLRLLTFLLGPGAGGAEAQGMLGRALLLSSLPDNCSFWDAFRPEGRRSVLRTIGEYLEQDEEQPTPSGFEPTVNPSSGISKMELLACFSPVLWDLLQREKSVWALQILVQAYLHMPPENLQQLVLSAEREAAQGFLTLMLQGKLQGKLQVPPSEEQALGRLTALLLQRYPRLTSQLFIDLSPLIPFLAVSDLMRFPPSLLANDSVLAAIRDYSPGMRPEQKEALAKRLLAPELFGEVPAWPQELLWAVLPLLPHLPLENFLQLSPHQIQALEDSWPAAGLGPGHARHVLRSLVNQSVQDGEEQVRRLGPLACFLSPEELQSLVPLSDPTGPVERGLLECAANGTLSPEGRVAYELLGVLRSSGGAVLSPRELRVWAPLFSQLGLRFLQELSEPQLRAMLPVLQGTSVTPAQAVLLLGRLLPRHDLSLEELCSLHLLLPGLSPQTLQAIPRRVLVGACSCLAPELSRLSACQTAALLQTFRVKDGVKNMGTTGAGPAVCIPGQQPIPTTWPDCLLPLLPLKLLQLDSLALLANRRRYWELPWSEQQAQFLWKKMQVPTNLTLRNLQALGTLAGGMSCEFLQQINSMVDFLEVVHMIYQLPTRVRGSLRACIWAELQRRMAMPEPEWTTVGPELNGLDSKLLLDLPIQLMDRLSNESIMLVVELVQRAPEQLLALTPLHQAALAERALQNLAPKETPVSGEVLETLGPLVGFLGTESTRQIPLQILLSHLSFCLGETFATELGWLLLQESVLGKPELWSQDEVEQAGRLVFTLSTEAISLIPREALGPETLERLLEKQQSWEQSRVGQLCRGPQLAAKKAALVAGVVRPAAEDLPEPVPNCADVRGTFPAACSATQIAEMELSDFKDCLTLFAGDPGLGPEEPRAAMGKAKWLWGPPRGFGPEQILQLGRLLIGLGDQELQELILVDWGVLSTLGQIDGWSSTQLRIVVSSFLRQSGRHVSHLDFVHLTALGYTLCGLRPEELQHISSWEFSQAALFLGTLHLQCSEEQLEFLAHLFVLPGGFGPISNWGPEIFTEIGTIAAGIPDLALSALLRGQIQGVTPLAISVIPPPKFAVVFSPIQLSSLASAQAVAVTPEQMAFLSPEQRRAVAWAQHEGKESPEQQGRSTAWGLQDWSRPSWSLVLTISFLGHLL</sequence>
<name>STRCL_HUMAN</name>